<dbReference type="EC" id="3.5.2.7" evidence="1"/>
<dbReference type="EMBL" id="AE015928">
    <property type="protein sequence ID" value="AAO77798.1"/>
    <property type="molecule type" value="Genomic_DNA"/>
</dbReference>
<dbReference type="RefSeq" id="NP_811604.1">
    <property type="nucleotide sequence ID" value="NC_004663.1"/>
</dbReference>
<dbReference type="RefSeq" id="WP_011108451.1">
    <property type="nucleotide sequence ID" value="NC_004663.1"/>
</dbReference>
<dbReference type="SMR" id="Q8A4B1"/>
<dbReference type="STRING" id="226186.BT_2692"/>
<dbReference type="PaxDb" id="226186-BT_2692"/>
<dbReference type="EnsemblBacteria" id="AAO77798">
    <property type="protein sequence ID" value="AAO77798"/>
    <property type="gene ID" value="BT_2692"/>
</dbReference>
<dbReference type="GeneID" id="60923863"/>
<dbReference type="KEGG" id="bth:BT_2692"/>
<dbReference type="PATRIC" id="fig|226186.12.peg.2733"/>
<dbReference type="eggNOG" id="COG1228">
    <property type="taxonomic scope" value="Bacteria"/>
</dbReference>
<dbReference type="HOGENOM" id="CLU_041647_0_1_10"/>
<dbReference type="InParanoid" id="Q8A4B1"/>
<dbReference type="OrthoDB" id="9776455at2"/>
<dbReference type="UniPathway" id="UPA00379">
    <property type="reaction ID" value="UER00551"/>
</dbReference>
<dbReference type="Proteomes" id="UP000001414">
    <property type="component" value="Chromosome"/>
</dbReference>
<dbReference type="GO" id="GO:0005737">
    <property type="term" value="C:cytoplasm"/>
    <property type="evidence" value="ECO:0007669"/>
    <property type="project" value="UniProtKB-SubCell"/>
</dbReference>
<dbReference type="GO" id="GO:0050480">
    <property type="term" value="F:imidazolonepropionase activity"/>
    <property type="evidence" value="ECO:0000318"/>
    <property type="project" value="GO_Central"/>
</dbReference>
<dbReference type="GO" id="GO:0005506">
    <property type="term" value="F:iron ion binding"/>
    <property type="evidence" value="ECO:0007669"/>
    <property type="project" value="UniProtKB-UniRule"/>
</dbReference>
<dbReference type="GO" id="GO:0008270">
    <property type="term" value="F:zinc ion binding"/>
    <property type="evidence" value="ECO:0007669"/>
    <property type="project" value="UniProtKB-UniRule"/>
</dbReference>
<dbReference type="GO" id="GO:0006548">
    <property type="term" value="P:L-histidine catabolic process"/>
    <property type="evidence" value="ECO:0000318"/>
    <property type="project" value="GO_Central"/>
</dbReference>
<dbReference type="GO" id="GO:0019556">
    <property type="term" value="P:L-histidine catabolic process to glutamate and formamide"/>
    <property type="evidence" value="ECO:0007669"/>
    <property type="project" value="UniProtKB-UniPathway"/>
</dbReference>
<dbReference type="GO" id="GO:0019557">
    <property type="term" value="P:L-histidine catabolic process to glutamate and formate"/>
    <property type="evidence" value="ECO:0007669"/>
    <property type="project" value="UniProtKB-UniPathway"/>
</dbReference>
<dbReference type="CDD" id="cd01296">
    <property type="entry name" value="Imidazolone-5PH"/>
    <property type="match status" value="1"/>
</dbReference>
<dbReference type="FunFam" id="3.20.20.140:FF:000007">
    <property type="entry name" value="Imidazolonepropionase"/>
    <property type="match status" value="1"/>
</dbReference>
<dbReference type="Gene3D" id="3.20.20.140">
    <property type="entry name" value="Metal-dependent hydrolases"/>
    <property type="match status" value="1"/>
</dbReference>
<dbReference type="Gene3D" id="2.30.40.10">
    <property type="entry name" value="Urease, subunit C, domain 1"/>
    <property type="match status" value="1"/>
</dbReference>
<dbReference type="HAMAP" id="MF_00372">
    <property type="entry name" value="HutI"/>
    <property type="match status" value="1"/>
</dbReference>
<dbReference type="InterPro" id="IPR013108">
    <property type="entry name" value="Amidohydro_3"/>
</dbReference>
<dbReference type="InterPro" id="IPR005920">
    <property type="entry name" value="HutI"/>
</dbReference>
<dbReference type="InterPro" id="IPR011059">
    <property type="entry name" value="Metal-dep_hydrolase_composite"/>
</dbReference>
<dbReference type="InterPro" id="IPR032466">
    <property type="entry name" value="Metal_Hydrolase"/>
</dbReference>
<dbReference type="NCBIfam" id="TIGR01224">
    <property type="entry name" value="hutI"/>
    <property type="match status" value="1"/>
</dbReference>
<dbReference type="PANTHER" id="PTHR42752">
    <property type="entry name" value="IMIDAZOLONEPROPIONASE"/>
    <property type="match status" value="1"/>
</dbReference>
<dbReference type="PANTHER" id="PTHR42752:SF1">
    <property type="entry name" value="IMIDAZOLONEPROPIONASE-RELATED"/>
    <property type="match status" value="1"/>
</dbReference>
<dbReference type="Pfam" id="PF07969">
    <property type="entry name" value="Amidohydro_3"/>
    <property type="match status" value="1"/>
</dbReference>
<dbReference type="SUPFAM" id="SSF51338">
    <property type="entry name" value="Composite domain of metallo-dependent hydrolases"/>
    <property type="match status" value="1"/>
</dbReference>
<dbReference type="SUPFAM" id="SSF51556">
    <property type="entry name" value="Metallo-dependent hydrolases"/>
    <property type="match status" value="1"/>
</dbReference>
<organism>
    <name type="scientific">Bacteroides thetaiotaomicron (strain ATCC 29148 / DSM 2079 / JCM 5827 / CCUG 10774 / NCTC 10582 / VPI-5482 / E50)</name>
    <dbReference type="NCBI Taxonomy" id="226186"/>
    <lineage>
        <taxon>Bacteria</taxon>
        <taxon>Pseudomonadati</taxon>
        <taxon>Bacteroidota</taxon>
        <taxon>Bacteroidia</taxon>
        <taxon>Bacteroidales</taxon>
        <taxon>Bacteroidaceae</taxon>
        <taxon>Bacteroides</taxon>
    </lineage>
</organism>
<comment type="function">
    <text evidence="1">Catalyzes the hydrolytic cleavage of the carbon-nitrogen bond in imidazolone-5-propanoate to yield N-formimidoyl-L-glutamate. It is the third step in the universal histidine degradation pathway.</text>
</comment>
<comment type="catalytic activity">
    <reaction evidence="1">
        <text>4-imidazolone-5-propanoate + H2O = N-formimidoyl-L-glutamate</text>
        <dbReference type="Rhea" id="RHEA:23660"/>
        <dbReference type="ChEBI" id="CHEBI:15377"/>
        <dbReference type="ChEBI" id="CHEBI:58928"/>
        <dbReference type="ChEBI" id="CHEBI:77893"/>
        <dbReference type="EC" id="3.5.2.7"/>
    </reaction>
</comment>
<comment type="cofactor">
    <cofactor evidence="1">
        <name>Zn(2+)</name>
        <dbReference type="ChEBI" id="CHEBI:29105"/>
    </cofactor>
    <cofactor evidence="1">
        <name>Fe(3+)</name>
        <dbReference type="ChEBI" id="CHEBI:29034"/>
    </cofactor>
    <text evidence="1">Binds 1 zinc or iron ion per subunit.</text>
</comment>
<comment type="pathway">
    <text evidence="1">Amino-acid degradation; L-histidine degradation into L-glutamate; N-formimidoyl-L-glutamate from L-histidine: step 3/3.</text>
</comment>
<comment type="subcellular location">
    <subcellularLocation>
        <location evidence="1">Cytoplasm</location>
    </subcellularLocation>
</comment>
<comment type="similarity">
    <text evidence="1">Belongs to the metallo-dependent hydrolases superfamily. HutI family.</text>
</comment>
<feature type="chain" id="PRO_0000306437" description="Imidazolonepropionase">
    <location>
        <begin position="1"/>
        <end position="417"/>
    </location>
</feature>
<feature type="binding site" evidence="1">
    <location>
        <position position="80"/>
    </location>
    <ligand>
        <name>Fe(3+)</name>
        <dbReference type="ChEBI" id="CHEBI:29034"/>
    </ligand>
</feature>
<feature type="binding site" evidence="1">
    <location>
        <position position="80"/>
    </location>
    <ligand>
        <name>Zn(2+)</name>
        <dbReference type="ChEBI" id="CHEBI:29105"/>
    </ligand>
</feature>
<feature type="binding site" evidence="1">
    <location>
        <position position="82"/>
    </location>
    <ligand>
        <name>Fe(3+)</name>
        <dbReference type="ChEBI" id="CHEBI:29034"/>
    </ligand>
</feature>
<feature type="binding site" evidence="1">
    <location>
        <position position="82"/>
    </location>
    <ligand>
        <name>Zn(2+)</name>
        <dbReference type="ChEBI" id="CHEBI:29105"/>
    </ligand>
</feature>
<feature type="binding site" evidence="1">
    <location>
        <position position="89"/>
    </location>
    <ligand>
        <name>4-imidazolone-5-propanoate</name>
        <dbReference type="ChEBI" id="CHEBI:77893"/>
    </ligand>
</feature>
<feature type="binding site" evidence="1">
    <location>
        <position position="152"/>
    </location>
    <ligand>
        <name>4-imidazolone-5-propanoate</name>
        <dbReference type="ChEBI" id="CHEBI:77893"/>
    </ligand>
</feature>
<feature type="binding site" evidence="1">
    <location>
        <position position="152"/>
    </location>
    <ligand>
        <name>N-formimidoyl-L-glutamate</name>
        <dbReference type="ChEBI" id="CHEBI:58928"/>
    </ligand>
</feature>
<feature type="binding site" evidence="1">
    <location>
        <position position="187"/>
    </location>
    <ligand>
        <name>4-imidazolone-5-propanoate</name>
        <dbReference type="ChEBI" id="CHEBI:77893"/>
    </ligand>
</feature>
<feature type="binding site" evidence="1">
    <location>
        <position position="252"/>
    </location>
    <ligand>
        <name>Fe(3+)</name>
        <dbReference type="ChEBI" id="CHEBI:29034"/>
    </ligand>
</feature>
<feature type="binding site" evidence="1">
    <location>
        <position position="252"/>
    </location>
    <ligand>
        <name>Zn(2+)</name>
        <dbReference type="ChEBI" id="CHEBI:29105"/>
    </ligand>
</feature>
<feature type="binding site" evidence="1">
    <location>
        <position position="255"/>
    </location>
    <ligand>
        <name>4-imidazolone-5-propanoate</name>
        <dbReference type="ChEBI" id="CHEBI:77893"/>
    </ligand>
</feature>
<feature type="binding site" evidence="1">
    <location>
        <position position="326"/>
    </location>
    <ligand>
        <name>Fe(3+)</name>
        <dbReference type="ChEBI" id="CHEBI:29034"/>
    </ligand>
</feature>
<feature type="binding site" evidence="1">
    <location>
        <position position="326"/>
    </location>
    <ligand>
        <name>Zn(2+)</name>
        <dbReference type="ChEBI" id="CHEBI:29105"/>
    </ligand>
</feature>
<feature type="binding site" evidence="1">
    <location>
        <position position="328"/>
    </location>
    <ligand>
        <name>N-formimidoyl-L-glutamate</name>
        <dbReference type="ChEBI" id="CHEBI:58928"/>
    </ligand>
</feature>
<feature type="binding site" evidence="1">
    <location>
        <position position="330"/>
    </location>
    <ligand>
        <name>N-formimidoyl-L-glutamate</name>
        <dbReference type="ChEBI" id="CHEBI:58928"/>
    </ligand>
</feature>
<feature type="binding site" evidence="1">
    <location>
        <position position="331"/>
    </location>
    <ligand>
        <name>4-imidazolone-5-propanoate</name>
        <dbReference type="ChEBI" id="CHEBI:77893"/>
    </ligand>
</feature>
<evidence type="ECO:0000255" key="1">
    <source>
        <dbReference type="HAMAP-Rule" id="MF_00372"/>
    </source>
</evidence>
<gene>
    <name evidence="1" type="primary">hutI</name>
    <name type="ordered locus">BT_2692</name>
</gene>
<reference key="1">
    <citation type="journal article" date="2003" name="Science">
        <title>A genomic view of the human-Bacteroides thetaiotaomicron symbiosis.</title>
        <authorList>
            <person name="Xu J."/>
            <person name="Bjursell M.K."/>
            <person name="Himrod J."/>
            <person name="Deng S."/>
            <person name="Carmichael L.K."/>
            <person name="Chiang H.C."/>
            <person name="Hooper L.V."/>
            <person name="Gordon J.I."/>
        </authorList>
    </citation>
    <scope>NUCLEOTIDE SEQUENCE [LARGE SCALE GENOMIC DNA]</scope>
    <source>
        <strain>ATCC 29148 / DSM 2079 / JCM 5827 / CCUG 10774 / NCTC 10582 / VPI-5482 / E50</strain>
    </source>
</reference>
<name>HUTI_BACTN</name>
<proteinExistence type="inferred from homology"/>
<keyword id="KW-0963">Cytoplasm</keyword>
<keyword id="KW-0369">Histidine metabolism</keyword>
<keyword id="KW-0378">Hydrolase</keyword>
<keyword id="KW-0408">Iron</keyword>
<keyword id="KW-0479">Metal-binding</keyword>
<keyword id="KW-1185">Reference proteome</keyword>
<keyword id="KW-0862">Zinc</keyword>
<protein>
    <recommendedName>
        <fullName evidence="1">Imidazolonepropionase</fullName>
        <ecNumber evidence="1">3.5.2.7</ecNumber>
    </recommendedName>
    <alternativeName>
        <fullName evidence="1">Imidazolone-5-propionate hydrolase</fullName>
    </alternativeName>
</protein>
<sequence length="417" mass="45700">MSENLIIFNARIVTPTGTSARKGAEMGQLRIIENGTVEVTKGIITYVGESRGEDRDGYYQHYWHYNARGHCLLPGFVDSHTHFVFGGERSEEFSWRLKGESYMSIMERGGGIASTVKATRQMNFLKLRSAAEGFLKKMSAMGVTTVEGKSGYGLDRETELLQLKIMRSLNNDEHKRIDIVSTFLGAHALPEEYKGRGDEYIDFLIREMLPVIRENELAECCDVFCEQGVFSVEQSRRLLQAAKEQGFLLKLHADEIVSFGGAELAAELGALSADHLLQASDAGIRAMADAGVVATLLPLTAFALKEPYARGREMIDAGCAVALATDLNPGSCFSGSIPLTIALACIYMKLSIEETITALTLNGAAALHRADRIGSIEVGKQGDFVILNSDNYHILPYYVGMNCVIMTIKGGMLYPVN</sequence>
<accession>Q8A4B1</accession>